<sequence>MQPDLFSTASQADANATPEEPDASNPAARAAWLRDELNRHNYSYHVLDNPSIPDAEYDKLFRELQALETSHPELLVFDSPTQRVGALALSAFPQVTHSVPMLSLGNGFEDEDIIAFDKRVSDGLNSTEIEYATELKFDGLAINLRYEDGILVEAATRGDGATGENVTTNIRTVRAIPLRLHTATPPKVLDVRGEVMMYKADLAKLNARQRDAGGKEFANPRNAAAGSLRQLDSRITAQRTLRFFAYGIGMLEGAEMPPSHSALLDWYAELGLPVCAERAVVKGAAGLLEFYKAVGQKRPTLPYEIDGVVYKVNRVEQQQQLGFVSRAPRYAIAHKFPAEEALTTVQGIEVQVGRTGAITPVARLAPVLVGGVTVTNATLHNEDEVRRKDIQIGDTVIVRRAGDVIPEVVAYVPEKRPVDAQPFVMPTNCPVCNSPIVKLEDEAIARCSGGWVKCAAQRKGGLLHFVSRRAMDVEGLGDQLVEQLVDKHIITTAADLYKLGFRALAELDRMADKSAQNVMAALEKSKSTTLARFIYALGIRHVGEATAKELARHFGNLEALLQASEEQLLEVADIGPVVAQSIRSFLSDPLNMELIEQLQAAGVRWPEHVVENKPKPFAGKTFVLTGTLPTLSRDQAAEKIEAAGGKVAGSVSKKTSYVVAGADAGSKLAKAEELGITILDESALLQLLDTHE</sequence>
<protein>
    <recommendedName>
        <fullName evidence="1">DNA ligase</fullName>
        <ecNumber evidence="1">6.5.1.2</ecNumber>
    </recommendedName>
    <alternativeName>
        <fullName evidence="1">Polydeoxyribonucleotide synthase [NAD(+)]</fullName>
    </alternativeName>
</protein>
<evidence type="ECO:0000255" key="1">
    <source>
        <dbReference type="HAMAP-Rule" id="MF_01588"/>
    </source>
</evidence>
<evidence type="ECO:0000256" key="2">
    <source>
        <dbReference type="SAM" id="MobiDB-lite"/>
    </source>
</evidence>
<accession>A6SZQ8</accession>
<comment type="function">
    <text evidence="1">DNA ligase that catalyzes the formation of phosphodiester linkages between 5'-phosphoryl and 3'-hydroxyl groups in double-stranded DNA using NAD as a coenzyme and as the energy source for the reaction. It is essential for DNA replication and repair of damaged DNA.</text>
</comment>
<comment type="catalytic activity">
    <reaction evidence="1">
        <text>NAD(+) + (deoxyribonucleotide)n-3'-hydroxyl + 5'-phospho-(deoxyribonucleotide)m = (deoxyribonucleotide)n+m + AMP + beta-nicotinamide D-nucleotide.</text>
        <dbReference type="EC" id="6.5.1.2"/>
    </reaction>
</comment>
<comment type="cofactor">
    <cofactor evidence="1">
        <name>Mg(2+)</name>
        <dbReference type="ChEBI" id="CHEBI:18420"/>
    </cofactor>
    <cofactor evidence="1">
        <name>Mn(2+)</name>
        <dbReference type="ChEBI" id="CHEBI:29035"/>
    </cofactor>
</comment>
<comment type="similarity">
    <text evidence="1">Belongs to the NAD-dependent DNA ligase family. LigA subfamily.</text>
</comment>
<organism>
    <name type="scientific">Janthinobacterium sp. (strain Marseille)</name>
    <name type="common">Minibacterium massiliensis</name>
    <dbReference type="NCBI Taxonomy" id="375286"/>
    <lineage>
        <taxon>Bacteria</taxon>
        <taxon>Pseudomonadati</taxon>
        <taxon>Pseudomonadota</taxon>
        <taxon>Betaproteobacteria</taxon>
        <taxon>Burkholderiales</taxon>
        <taxon>Oxalobacteraceae</taxon>
        <taxon>Janthinobacterium</taxon>
    </lineage>
</organism>
<reference key="1">
    <citation type="journal article" date="2007" name="PLoS Genet.">
        <title>Genome analysis of Minibacterium massiliensis highlights the convergent evolution of water-living bacteria.</title>
        <authorList>
            <person name="Audic S."/>
            <person name="Robert C."/>
            <person name="Campagna B."/>
            <person name="Parinello H."/>
            <person name="Claverie J.-M."/>
            <person name="Raoult D."/>
            <person name="Drancourt M."/>
        </authorList>
    </citation>
    <scope>NUCLEOTIDE SEQUENCE [LARGE SCALE GENOMIC DNA]</scope>
    <source>
        <strain>Marseille</strain>
    </source>
</reference>
<keyword id="KW-0227">DNA damage</keyword>
<keyword id="KW-0234">DNA repair</keyword>
<keyword id="KW-0235">DNA replication</keyword>
<keyword id="KW-0436">Ligase</keyword>
<keyword id="KW-0460">Magnesium</keyword>
<keyword id="KW-0464">Manganese</keyword>
<keyword id="KW-0479">Metal-binding</keyword>
<keyword id="KW-0520">NAD</keyword>
<keyword id="KW-0862">Zinc</keyword>
<feature type="chain" id="PRO_0000313269" description="DNA ligase">
    <location>
        <begin position="1"/>
        <end position="692"/>
    </location>
</feature>
<feature type="domain" description="BRCT" evidence="1">
    <location>
        <begin position="612"/>
        <end position="692"/>
    </location>
</feature>
<feature type="region of interest" description="Disordered" evidence="2">
    <location>
        <begin position="1"/>
        <end position="27"/>
    </location>
</feature>
<feature type="compositionally biased region" description="Polar residues" evidence="2">
    <location>
        <begin position="1"/>
        <end position="14"/>
    </location>
</feature>
<feature type="active site" description="N6-AMP-lysine intermediate" evidence="1">
    <location>
        <position position="136"/>
    </location>
</feature>
<feature type="binding site" evidence="1">
    <location>
        <begin position="54"/>
        <end position="58"/>
    </location>
    <ligand>
        <name>NAD(+)</name>
        <dbReference type="ChEBI" id="CHEBI:57540"/>
    </ligand>
</feature>
<feature type="binding site" evidence="1">
    <location>
        <begin position="103"/>
        <end position="104"/>
    </location>
    <ligand>
        <name>NAD(+)</name>
        <dbReference type="ChEBI" id="CHEBI:57540"/>
    </ligand>
</feature>
<feature type="binding site" evidence="1">
    <location>
        <position position="134"/>
    </location>
    <ligand>
        <name>NAD(+)</name>
        <dbReference type="ChEBI" id="CHEBI:57540"/>
    </ligand>
</feature>
<feature type="binding site" evidence="1">
    <location>
        <position position="157"/>
    </location>
    <ligand>
        <name>NAD(+)</name>
        <dbReference type="ChEBI" id="CHEBI:57540"/>
    </ligand>
</feature>
<feature type="binding site" evidence="1">
    <location>
        <position position="194"/>
    </location>
    <ligand>
        <name>NAD(+)</name>
        <dbReference type="ChEBI" id="CHEBI:57540"/>
    </ligand>
</feature>
<feature type="binding site" evidence="1">
    <location>
        <position position="311"/>
    </location>
    <ligand>
        <name>NAD(+)</name>
        <dbReference type="ChEBI" id="CHEBI:57540"/>
    </ligand>
</feature>
<feature type="binding site" evidence="1">
    <location>
        <position position="335"/>
    </location>
    <ligand>
        <name>NAD(+)</name>
        <dbReference type="ChEBI" id="CHEBI:57540"/>
    </ligand>
</feature>
<feature type="binding site" evidence="1">
    <location>
        <position position="429"/>
    </location>
    <ligand>
        <name>Zn(2+)</name>
        <dbReference type="ChEBI" id="CHEBI:29105"/>
    </ligand>
</feature>
<feature type="binding site" evidence="1">
    <location>
        <position position="432"/>
    </location>
    <ligand>
        <name>Zn(2+)</name>
        <dbReference type="ChEBI" id="CHEBI:29105"/>
    </ligand>
</feature>
<feature type="binding site" evidence="1">
    <location>
        <position position="447"/>
    </location>
    <ligand>
        <name>Zn(2+)</name>
        <dbReference type="ChEBI" id="CHEBI:29105"/>
    </ligand>
</feature>
<feature type="binding site" evidence="1">
    <location>
        <position position="454"/>
    </location>
    <ligand>
        <name>Zn(2+)</name>
        <dbReference type="ChEBI" id="CHEBI:29105"/>
    </ligand>
</feature>
<name>DNLJ_JANMA</name>
<dbReference type="EC" id="6.5.1.2" evidence="1"/>
<dbReference type="EMBL" id="CP000269">
    <property type="protein sequence ID" value="ABR89648.1"/>
    <property type="molecule type" value="Genomic_DNA"/>
</dbReference>
<dbReference type="RefSeq" id="WP_012079918.1">
    <property type="nucleotide sequence ID" value="NC_009659.1"/>
</dbReference>
<dbReference type="SMR" id="A6SZQ8"/>
<dbReference type="STRING" id="375286.mma_2065"/>
<dbReference type="KEGG" id="mms:mma_2065"/>
<dbReference type="eggNOG" id="COG0272">
    <property type="taxonomic scope" value="Bacteria"/>
</dbReference>
<dbReference type="HOGENOM" id="CLU_007764_2_1_4"/>
<dbReference type="OrthoDB" id="9759736at2"/>
<dbReference type="Proteomes" id="UP000006388">
    <property type="component" value="Chromosome"/>
</dbReference>
<dbReference type="GO" id="GO:0005829">
    <property type="term" value="C:cytosol"/>
    <property type="evidence" value="ECO:0007669"/>
    <property type="project" value="TreeGrafter"/>
</dbReference>
<dbReference type="GO" id="GO:0003677">
    <property type="term" value="F:DNA binding"/>
    <property type="evidence" value="ECO:0007669"/>
    <property type="project" value="InterPro"/>
</dbReference>
<dbReference type="GO" id="GO:0003911">
    <property type="term" value="F:DNA ligase (NAD+) activity"/>
    <property type="evidence" value="ECO:0007669"/>
    <property type="project" value="UniProtKB-UniRule"/>
</dbReference>
<dbReference type="GO" id="GO:0046872">
    <property type="term" value="F:metal ion binding"/>
    <property type="evidence" value="ECO:0007669"/>
    <property type="project" value="UniProtKB-KW"/>
</dbReference>
<dbReference type="GO" id="GO:0006281">
    <property type="term" value="P:DNA repair"/>
    <property type="evidence" value="ECO:0007669"/>
    <property type="project" value="UniProtKB-KW"/>
</dbReference>
<dbReference type="GO" id="GO:0006260">
    <property type="term" value="P:DNA replication"/>
    <property type="evidence" value="ECO:0007669"/>
    <property type="project" value="UniProtKB-KW"/>
</dbReference>
<dbReference type="CDD" id="cd17748">
    <property type="entry name" value="BRCT_DNA_ligase_like"/>
    <property type="match status" value="1"/>
</dbReference>
<dbReference type="CDD" id="cd00114">
    <property type="entry name" value="LIGANc"/>
    <property type="match status" value="1"/>
</dbReference>
<dbReference type="FunFam" id="1.10.150.20:FF:000006">
    <property type="entry name" value="DNA ligase"/>
    <property type="match status" value="1"/>
</dbReference>
<dbReference type="FunFam" id="1.10.150.20:FF:000007">
    <property type="entry name" value="DNA ligase"/>
    <property type="match status" value="1"/>
</dbReference>
<dbReference type="FunFam" id="1.10.287.610:FF:000002">
    <property type="entry name" value="DNA ligase"/>
    <property type="match status" value="1"/>
</dbReference>
<dbReference type="FunFam" id="2.40.50.140:FF:000012">
    <property type="entry name" value="DNA ligase"/>
    <property type="match status" value="1"/>
</dbReference>
<dbReference type="FunFam" id="3.30.470.30:FF:000001">
    <property type="entry name" value="DNA ligase"/>
    <property type="match status" value="1"/>
</dbReference>
<dbReference type="FunFam" id="3.40.50.10190:FF:000054">
    <property type="entry name" value="DNA ligase"/>
    <property type="match status" value="1"/>
</dbReference>
<dbReference type="Gene3D" id="6.20.10.30">
    <property type="match status" value="1"/>
</dbReference>
<dbReference type="Gene3D" id="1.10.150.20">
    <property type="entry name" value="5' to 3' exonuclease, C-terminal subdomain"/>
    <property type="match status" value="2"/>
</dbReference>
<dbReference type="Gene3D" id="3.40.50.10190">
    <property type="entry name" value="BRCT domain"/>
    <property type="match status" value="1"/>
</dbReference>
<dbReference type="Gene3D" id="3.30.470.30">
    <property type="entry name" value="DNA ligase/mRNA capping enzyme"/>
    <property type="match status" value="1"/>
</dbReference>
<dbReference type="Gene3D" id="1.10.287.610">
    <property type="entry name" value="Helix hairpin bin"/>
    <property type="match status" value="1"/>
</dbReference>
<dbReference type="Gene3D" id="2.40.50.140">
    <property type="entry name" value="Nucleic acid-binding proteins"/>
    <property type="match status" value="1"/>
</dbReference>
<dbReference type="HAMAP" id="MF_01588">
    <property type="entry name" value="DNA_ligase_A"/>
    <property type="match status" value="1"/>
</dbReference>
<dbReference type="InterPro" id="IPR001357">
    <property type="entry name" value="BRCT_dom"/>
</dbReference>
<dbReference type="InterPro" id="IPR036420">
    <property type="entry name" value="BRCT_dom_sf"/>
</dbReference>
<dbReference type="InterPro" id="IPR041663">
    <property type="entry name" value="DisA/LigA_HHH"/>
</dbReference>
<dbReference type="InterPro" id="IPR001679">
    <property type="entry name" value="DNA_ligase"/>
</dbReference>
<dbReference type="InterPro" id="IPR018239">
    <property type="entry name" value="DNA_ligase_AS"/>
</dbReference>
<dbReference type="InterPro" id="IPR033136">
    <property type="entry name" value="DNA_ligase_CS"/>
</dbReference>
<dbReference type="InterPro" id="IPR013839">
    <property type="entry name" value="DNAligase_adenylation"/>
</dbReference>
<dbReference type="InterPro" id="IPR013840">
    <property type="entry name" value="DNAligase_N"/>
</dbReference>
<dbReference type="InterPro" id="IPR003583">
    <property type="entry name" value="Hlx-hairpin-Hlx_DNA-bd_motif"/>
</dbReference>
<dbReference type="InterPro" id="IPR012340">
    <property type="entry name" value="NA-bd_OB-fold"/>
</dbReference>
<dbReference type="InterPro" id="IPR004150">
    <property type="entry name" value="NAD_DNA_ligase_OB"/>
</dbReference>
<dbReference type="InterPro" id="IPR010994">
    <property type="entry name" value="RuvA_2-like"/>
</dbReference>
<dbReference type="InterPro" id="IPR004149">
    <property type="entry name" value="Znf_DNAligase_C4"/>
</dbReference>
<dbReference type="NCBIfam" id="TIGR00575">
    <property type="entry name" value="dnlj"/>
    <property type="match status" value="1"/>
</dbReference>
<dbReference type="NCBIfam" id="NF005932">
    <property type="entry name" value="PRK07956.1"/>
    <property type="match status" value="1"/>
</dbReference>
<dbReference type="PANTHER" id="PTHR23389">
    <property type="entry name" value="CHROMOSOME TRANSMISSION FIDELITY FACTOR 18"/>
    <property type="match status" value="1"/>
</dbReference>
<dbReference type="PANTHER" id="PTHR23389:SF9">
    <property type="entry name" value="DNA LIGASE"/>
    <property type="match status" value="1"/>
</dbReference>
<dbReference type="Pfam" id="PF00533">
    <property type="entry name" value="BRCT"/>
    <property type="match status" value="1"/>
</dbReference>
<dbReference type="Pfam" id="PF01653">
    <property type="entry name" value="DNA_ligase_aden"/>
    <property type="match status" value="1"/>
</dbReference>
<dbReference type="Pfam" id="PF03120">
    <property type="entry name" value="DNA_ligase_OB"/>
    <property type="match status" value="1"/>
</dbReference>
<dbReference type="Pfam" id="PF03119">
    <property type="entry name" value="DNA_ligase_ZBD"/>
    <property type="match status" value="1"/>
</dbReference>
<dbReference type="Pfam" id="PF12826">
    <property type="entry name" value="HHH_2"/>
    <property type="match status" value="1"/>
</dbReference>
<dbReference type="Pfam" id="PF22745">
    <property type="entry name" value="Nlig-Ia"/>
    <property type="match status" value="1"/>
</dbReference>
<dbReference type="PIRSF" id="PIRSF001604">
    <property type="entry name" value="LigA"/>
    <property type="match status" value="1"/>
</dbReference>
<dbReference type="SMART" id="SM00292">
    <property type="entry name" value="BRCT"/>
    <property type="match status" value="1"/>
</dbReference>
<dbReference type="SMART" id="SM00278">
    <property type="entry name" value="HhH1"/>
    <property type="match status" value="4"/>
</dbReference>
<dbReference type="SMART" id="SM00532">
    <property type="entry name" value="LIGANc"/>
    <property type="match status" value="1"/>
</dbReference>
<dbReference type="SUPFAM" id="SSF52113">
    <property type="entry name" value="BRCT domain"/>
    <property type="match status" value="1"/>
</dbReference>
<dbReference type="SUPFAM" id="SSF56091">
    <property type="entry name" value="DNA ligase/mRNA capping enzyme, catalytic domain"/>
    <property type="match status" value="1"/>
</dbReference>
<dbReference type="SUPFAM" id="SSF50249">
    <property type="entry name" value="Nucleic acid-binding proteins"/>
    <property type="match status" value="1"/>
</dbReference>
<dbReference type="SUPFAM" id="SSF47781">
    <property type="entry name" value="RuvA domain 2-like"/>
    <property type="match status" value="1"/>
</dbReference>
<dbReference type="PROSITE" id="PS50172">
    <property type="entry name" value="BRCT"/>
    <property type="match status" value="1"/>
</dbReference>
<dbReference type="PROSITE" id="PS01055">
    <property type="entry name" value="DNA_LIGASE_N1"/>
    <property type="match status" value="1"/>
</dbReference>
<dbReference type="PROSITE" id="PS01056">
    <property type="entry name" value="DNA_LIGASE_N2"/>
    <property type="match status" value="1"/>
</dbReference>
<proteinExistence type="inferred from homology"/>
<gene>
    <name evidence="1" type="primary">ligA</name>
    <name type="ordered locus">mma_2065</name>
</gene>